<organism>
    <name type="scientific">Homo sapiens</name>
    <name type="common">Human</name>
    <dbReference type="NCBI Taxonomy" id="9606"/>
    <lineage>
        <taxon>Eukaryota</taxon>
        <taxon>Metazoa</taxon>
        <taxon>Chordata</taxon>
        <taxon>Craniata</taxon>
        <taxon>Vertebrata</taxon>
        <taxon>Euteleostomi</taxon>
        <taxon>Mammalia</taxon>
        <taxon>Eutheria</taxon>
        <taxon>Euarchontoglires</taxon>
        <taxon>Primates</taxon>
        <taxon>Haplorrhini</taxon>
        <taxon>Catarrhini</taxon>
        <taxon>Hominidae</taxon>
        <taxon>Homo</taxon>
    </lineage>
</organism>
<feature type="chain" id="PRO_0000080226" description="Chromodomain-helicase-DNA-binding protein 2">
    <location>
        <begin position="1"/>
        <end position="1828"/>
    </location>
</feature>
<feature type="domain" description="Chromo 1" evidence="4">
    <location>
        <begin position="261"/>
        <end position="353"/>
    </location>
</feature>
<feature type="domain" description="Chromo 2" evidence="4">
    <location>
        <begin position="378"/>
        <end position="456"/>
    </location>
</feature>
<feature type="domain" description="Helicase ATP-binding" evidence="5">
    <location>
        <begin position="496"/>
        <end position="666"/>
    </location>
</feature>
<feature type="domain" description="Helicase C-terminal" evidence="6">
    <location>
        <begin position="795"/>
        <end position="946"/>
    </location>
</feature>
<feature type="region of interest" description="Disordered" evidence="7">
    <location>
        <begin position="1"/>
        <end position="243"/>
    </location>
</feature>
<feature type="region of interest" description="Disordered" evidence="7">
    <location>
        <begin position="1030"/>
        <end position="1124"/>
    </location>
</feature>
<feature type="region of interest" description="Disordered" evidence="7">
    <location>
        <begin position="1331"/>
        <end position="1462"/>
    </location>
</feature>
<feature type="region of interest" description="CHD1 helical C-terminal domain (CHCT)" evidence="2">
    <location>
        <begin position="1464"/>
        <end position="1566"/>
    </location>
</feature>
<feature type="region of interest" description="Disordered" evidence="7">
    <location>
        <begin position="1556"/>
        <end position="1638"/>
    </location>
</feature>
<feature type="region of interest" description="Disordered" evidence="7">
    <location>
        <begin position="1680"/>
        <end position="1828"/>
    </location>
</feature>
<feature type="short sequence motif" description="DEAH box">
    <location>
        <begin position="617"/>
        <end position="620"/>
    </location>
</feature>
<feature type="compositionally biased region" description="Basic and acidic residues" evidence="7">
    <location>
        <begin position="1"/>
        <end position="14"/>
    </location>
</feature>
<feature type="compositionally biased region" description="Low complexity" evidence="7">
    <location>
        <begin position="15"/>
        <end position="75"/>
    </location>
</feature>
<feature type="compositionally biased region" description="Basic and acidic residues" evidence="7">
    <location>
        <begin position="81"/>
        <end position="101"/>
    </location>
</feature>
<feature type="compositionally biased region" description="Basic and acidic residues" evidence="7">
    <location>
        <begin position="115"/>
        <end position="128"/>
    </location>
</feature>
<feature type="compositionally biased region" description="Basic and acidic residues" evidence="7">
    <location>
        <begin position="146"/>
        <end position="155"/>
    </location>
</feature>
<feature type="compositionally biased region" description="Basic residues" evidence="7">
    <location>
        <begin position="175"/>
        <end position="204"/>
    </location>
</feature>
<feature type="compositionally biased region" description="Acidic residues" evidence="7">
    <location>
        <begin position="234"/>
        <end position="243"/>
    </location>
</feature>
<feature type="compositionally biased region" description="Basic and acidic residues" evidence="7">
    <location>
        <begin position="1037"/>
        <end position="1065"/>
    </location>
</feature>
<feature type="compositionally biased region" description="Basic and acidic residues" evidence="7">
    <location>
        <begin position="1347"/>
        <end position="1371"/>
    </location>
</feature>
<feature type="compositionally biased region" description="Basic and acidic residues" evidence="7">
    <location>
        <begin position="1396"/>
        <end position="1431"/>
    </location>
</feature>
<feature type="compositionally biased region" description="Basic and acidic residues" evidence="7">
    <location>
        <begin position="1565"/>
        <end position="1574"/>
    </location>
</feature>
<feature type="compositionally biased region" description="Polar residues" evidence="7">
    <location>
        <begin position="1584"/>
        <end position="1601"/>
    </location>
</feature>
<feature type="compositionally biased region" description="Basic and acidic residues" evidence="7">
    <location>
        <begin position="1698"/>
        <end position="1720"/>
    </location>
</feature>
<feature type="compositionally biased region" description="Basic and acidic residues" evidence="7">
    <location>
        <begin position="1739"/>
        <end position="1749"/>
    </location>
</feature>
<feature type="compositionally biased region" description="Basic and acidic residues" evidence="7">
    <location>
        <begin position="1760"/>
        <end position="1772"/>
    </location>
</feature>
<feature type="compositionally biased region" description="Basic and acidic residues" evidence="7">
    <location>
        <begin position="1795"/>
        <end position="1814"/>
    </location>
</feature>
<feature type="binding site" evidence="5">
    <location>
        <begin position="509"/>
        <end position="516"/>
    </location>
    <ligand>
        <name>ATP</name>
        <dbReference type="ChEBI" id="CHEBI:30616"/>
    </ligand>
</feature>
<feature type="modified residue" description="Phosphoserine" evidence="16 17 19">
    <location>
        <position position="207"/>
    </location>
</feature>
<feature type="modified residue" description="Phosphoserine" evidence="16 17 19">
    <location>
        <position position="208"/>
    </location>
</feature>
<feature type="modified residue" description="Phosphothreonine" evidence="15 17">
    <location>
        <position position="240"/>
    </location>
</feature>
<feature type="modified residue" description="Phosphoserine" evidence="15 17">
    <location>
        <position position="242"/>
    </location>
</feature>
<feature type="modified residue" description="Phosphoserine" evidence="19">
    <location>
        <position position="1085"/>
    </location>
</feature>
<feature type="modified residue" description="Phosphoserine" evidence="19">
    <location>
        <position position="1087"/>
    </location>
</feature>
<feature type="modified residue" description="Phosphoserine" evidence="18">
    <location>
        <position position="1365"/>
    </location>
</feature>
<feature type="modified residue" description="Phosphoserine" evidence="18">
    <location>
        <position position="1386"/>
    </location>
</feature>
<feature type="modified residue" description="Phosphoserine" evidence="18">
    <location>
        <position position="1807"/>
    </location>
</feature>
<feature type="splice variant" id="VSP_042791" description="In isoform 3." evidence="11 13">
    <location>
        <begin position="502"/>
        <end position="1828"/>
    </location>
</feature>
<feature type="splice variant" id="VSP_021918" description="In isoform 2." evidence="12">
    <original>HHHDSKRRRSDEFRPQNYHQQ</original>
    <variation>YAKGCETPGANLCQELFLGRK</variation>
    <location>
        <begin position="1719"/>
        <end position="1739"/>
    </location>
</feature>
<feature type="splice variant" id="VSP_021919" description="In isoform 2." evidence="12">
    <location>
        <begin position="1740"/>
        <end position="1828"/>
    </location>
</feature>
<feature type="sequence variant" id="VAR_078614" description="In DEE94." evidence="9">
    <location>
        <begin position="112"/>
        <end position="1828"/>
    </location>
</feature>
<feature type="sequence variant" id="VAR_078615" description="In DEE94." evidence="8">
    <location>
        <begin position="121"/>
        <end position="1828"/>
    </location>
</feature>
<feature type="sequence variant" id="VAR_085039" description="Found in a patient with progressive myoclonus epilepsy; uncertain significance." evidence="10">
    <location>
        <begin position="178"/>
        <end position="1828"/>
    </location>
</feature>
<feature type="sequence variant" id="VAR_070209" description="In DEE94; dbSNP:rs864309537." evidence="8">
    <original>W</original>
    <variation>R</variation>
    <location>
        <position position="548"/>
    </location>
</feature>
<feature type="sequence variant" id="VAR_070210" description="In DEE94; dbSNP:rs864309540." evidence="8">
    <original>L</original>
    <variation>P</variation>
    <location>
        <position position="823"/>
    </location>
</feature>
<feature type="sequence variant" id="VAR_061099" description="In dbSNP:rs56227200.">
    <original>G</original>
    <variation>A</variation>
    <location>
        <position position="1574"/>
    </location>
</feature>
<feature type="sequence conflict" description="In Ref. 1; AAB87382." evidence="14" ref="1">
    <original>I</original>
    <variation>L</variation>
    <location>
        <position position="1156"/>
    </location>
</feature>
<keyword id="KW-0025">Alternative splicing</keyword>
<keyword id="KW-0067">ATP-binding</keyword>
<keyword id="KW-0156">Chromatin regulator</keyword>
<keyword id="KW-0225">Disease variant</keyword>
<keyword id="KW-0238">DNA-binding</keyword>
<keyword id="KW-0887">Epilepsy</keyword>
<keyword id="KW-0378">Hydrolase</keyword>
<keyword id="KW-0517">Myogenesis</keyword>
<keyword id="KW-0547">Nucleotide-binding</keyword>
<keyword id="KW-0539">Nucleus</keyword>
<keyword id="KW-0597">Phosphoprotein</keyword>
<keyword id="KW-1267">Proteomics identification</keyword>
<keyword id="KW-1185">Reference proteome</keyword>
<keyword id="KW-0677">Repeat</keyword>
<keyword id="KW-0804">Transcription</keyword>
<keyword id="KW-0805">Transcription regulation</keyword>
<name>CHD2_HUMAN</name>
<comment type="function">
    <text evidence="1">ATP-dependent chromatin-remodeling factor that specifically binds to the promoter of target genes, leading to chromatin remodeling, possibly by promoting deposition of histone H3.3. Involved in myogenesis via interaction with MYOD1: binds to myogenic gene regulatory sequences and mediates incorporation of histone H3.3 prior to the onset of myogenic gene expression, promoting their expression (By similarity).</text>
</comment>
<comment type="catalytic activity">
    <reaction evidence="3">
        <text>ATP + H2O = ADP + phosphate + H(+)</text>
        <dbReference type="Rhea" id="RHEA:13065"/>
        <dbReference type="ChEBI" id="CHEBI:15377"/>
        <dbReference type="ChEBI" id="CHEBI:15378"/>
        <dbReference type="ChEBI" id="CHEBI:30616"/>
        <dbReference type="ChEBI" id="CHEBI:43474"/>
        <dbReference type="ChEBI" id="CHEBI:456216"/>
    </reaction>
</comment>
<comment type="subunit">
    <text evidence="1">Interacts with MYOD1. Interacts with histone H3.3 (By similarity).</text>
</comment>
<comment type="interaction">
    <interactant intactId="EBI-1210503">
        <id>O14647</id>
    </interactant>
    <interactant intactId="EBI-10181188">
        <id>Q8N7W2-2</id>
        <label>BEND7</label>
    </interactant>
    <organismsDiffer>false</organismsDiffer>
    <experiments>3</experiments>
</comment>
<comment type="interaction">
    <interactant intactId="EBI-1210503">
        <id>O14647</id>
    </interactant>
    <interactant intactId="EBI-10172526">
        <id>Q9UJV3-2</id>
        <label>MID2</label>
    </interactant>
    <organismsDiffer>false</organismsDiffer>
    <experiments>3</experiments>
</comment>
<comment type="interaction">
    <interactant intactId="EBI-1210503">
        <id>O14647</id>
    </interactant>
    <interactant intactId="EBI-372899">
        <id>Q13148</id>
        <label>TARDBP</label>
    </interactant>
    <organismsDiffer>false</organismsDiffer>
    <experiments>2</experiments>
</comment>
<comment type="interaction">
    <interactant intactId="EBI-1210503">
        <id>O14647</id>
    </interactant>
    <interactant intactId="EBI-10180409">
        <id>Q969V4</id>
        <label>TEKT1</label>
    </interactant>
    <organismsDiffer>false</organismsDiffer>
    <experiments>3</experiments>
</comment>
<comment type="interaction">
    <interactant intactId="EBI-1210503">
        <id>O14647</id>
    </interactant>
    <interactant intactId="EBI-741515">
        <id>Q9NVV9</id>
        <label>THAP1</label>
    </interactant>
    <organismsDiffer>false</organismsDiffer>
    <experiments>3</experiments>
</comment>
<comment type="interaction">
    <interactant intactId="EBI-1210503">
        <id>O14647</id>
    </interactant>
    <interactant intactId="EBI-725997">
        <id>Q8WV44</id>
        <label>TRIM41</label>
    </interactant>
    <organismsDiffer>false</organismsDiffer>
    <experiments>4</experiments>
</comment>
<comment type="interaction">
    <interactant intactId="EBI-11985957">
        <id>O14647-3</id>
    </interactant>
    <interactant intactId="EBI-741705">
        <id>Q8IYF1</id>
        <label>ELOA2</label>
    </interactant>
    <organismsDiffer>false</organismsDiffer>
    <experiments>3</experiments>
</comment>
<comment type="interaction">
    <interactant intactId="EBI-11985957">
        <id>O14647-3</id>
    </interactant>
    <interactant intactId="EBI-16439278">
        <id>Q6FHY5</id>
        <label>MEOX2</label>
    </interactant>
    <organismsDiffer>false</organismsDiffer>
    <experiments>3</experiments>
</comment>
<comment type="interaction">
    <interactant intactId="EBI-11985957">
        <id>O14647-3</id>
    </interactant>
    <interactant intactId="EBI-2130429">
        <id>Q9BYV2</id>
        <label>TRIM54</label>
    </interactant>
    <organismsDiffer>false</organismsDiffer>
    <experiments>3</experiments>
</comment>
<comment type="interaction">
    <interactant intactId="EBI-11985957">
        <id>O14647-3</id>
    </interactant>
    <interactant intactId="EBI-8643207">
        <id>Q8TD17</id>
        <label>ZNF398</label>
    </interactant>
    <organismsDiffer>false</organismsDiffer>
    <experiments>3</experiments>
</comment>
<comment type="subcellular location">
    <subcellularLocation>
        <location evidence="1">Nucleus</location>
    </subcellularLocation>
    <text evidence="1">Binds to myogenic gene promoters.</text>
</comment>
<comment type="alternative products">
    <event type="alternative splicing"/>
    <isoform>
        <id>O14647-1</id>
        <name>1</name>
        <sequence type="displayed"/>
    </isoform>
    <isoform>
        <id>O14647-2</id>
        <name>2</name>
        <sequence type="described" ref="VSP_021918 VSP_021919"/>
    </isoform>
    <isoform>
        <id>O14647-3</id>
        <name>3</name>
        <sequence type="described" ref="VSP_042791"/>
    </isoform>
</comment>
<comment type="domain">
    <text evidence="2">The CHD1 helical C-terminal domain (CHCT) may bind DNA and nucleosomes.</text>
</comment>
<comment type="disease" evidence="8 9">
    <disease id="DI-03857">
        <name>Developmental and epileptic encephalopathy 94</name>
        <acronym>DEE94</acronym>
        <description>A form of epileptic encephalopathy, a heterogeneous group of early-onset epilepsies characterized by refractory seizures, neurodevelopmental impairment, and poor prognosis. Development is normal prior to seizure onset, after which cognitive and motor delays become apparent. DEE94 is an autosomal dominant, severe form characterized by onset of multiple seizure types in the first few years of life.</description>
        <dbReference type="MIM" id="615369"/>
    </disease>
    <text>The disease is caused by variants affecting the gene represented in this entry.</text>
</comment>
<comment type="similarity">
    <text evidence="14">Belongs to the SNF2/RAD54 helicase family.</text>
</comment>
<evidence type="ECO:0000250" key="1"/>
<evidence type="ECO:0000250" key="2">
    <source>
        <dbReference type="UniProtKB" id="O14646"/>
    </source>
</evidence>
<evidence type="ECO:0000250" key="3">
    <source>
        <dbReference type="UniProtKB" id="Q12873"/>
    </source>
</evidence>
<evidence type="ECO:0000255" key="4">
    <source>
        <dbReference type="PROSITE-ProRule" id="PRU00053"/>
    </source>
</evidence>
<evidence type="ECO:0000255" key="5">
    <source>
        <dbReference type="PROSITE-ProRule" id="PRU00541"/>
    </source>
</evidence>
<evidence type="ECO:0000255" key="6">
    <source>
        <dbReference type="PROSITE-ProRule" id="PRU00542"/>
    </source>
</evidence>
<evidence type="ECO:0000256" key="7">
    <source>
        <dbReference type="SAM" id="MobiDB-lite"/>
    </source>
</evidence>
<evidence type="ECO:0000269" key="8">
    <source>
    </source>
</evidence>
<evidence type="ECO:0000269" key="9">
    <source>
    </source>
</evidence>
<evidence type="ECO:0000269" key="10">
    <source>
    </source>
</evidence>
<evidence type="ECO:0000303" key="11">
    <source>
    </source>
</evidence>
<evidence type="ECO:0000303" key="12">
    <source>
    </source>
</evidence>
<evidence type="ECO:0000303" key="13">
    <source ref="2"/>
</evidence>
<evidence type="ECO:0000305" key="14"/>
<evidence type="ECO:0007744" key="15">
    <source>
    </source>
</evidence>
<evidence type="ECO:0007744" key="16">
    <source>
    </source>
</evidence>
<evidence type="ECO:0007744" key="17">
    <source>
    </source>
</evidence>
<evidence type="ECO:0007744" key="18">
    <source>
    </source>
</evidence>
<evidence type="ECO:0007744" key="19">
    <source>
    </source>
</evidence>
<sequence length="1828" mass="211344">MMRNKDKSQEEDSSLHSNASSHSASEEASGSDSGSQSESEQGSDPGSGHGSESNSSSESSESQSESESESAGSKSQPVLPEAKEKPASKKERIADVKKMWEEYPDVYGVRRSNRSRQEPSRFNIKEEASSGSESGSPKRRGQRQLKKQEKWKQEPSEDEQEQGTSAESEPEQKKVKARRPVPRRTVPKPRVKKQPKTQRGKRKKQDSSDEDDDDDEAPKRQTRRRAAKNVSYKEDDDFETDSDDLIEMTGEGVDEQQDNSETIEKVLDSRLGKKGATGASTTVYAIEANGDPSGDFDTEKDEGEIQYLIKWKGWSYIHSTWESEESLQQQKVKGLKKLENFKKKEDEIKQWLGKVSPEDVEYFNCQQELASELNKQYQIVERVIAVKTSKSTLGQTDFPAHSRKPAPSNEPEYLCKWMGLPYSECSWEDEALIGKKFQNCIDSFHSRNNSKTIPTRECKALKQRPRFVALKKQPAYLGGENLELRDYQLEGLNWLAHSWCKNNSVILADEMGLGKTIQTISFLSYLFHQHQLYGPFLIVVPLSTLTSWQREFEIWAPEINVVVYIGDLMSRNTIREYEWIHSQTKRLKFNALITTYEILLKDKTVLGSINWAFLGVDEAHRLKNDDSLLYKTLIDFKSNHRLLITGTPLQNSLKELWSLLHFIMPEKFEFWEDFEEDHGKGRENGYQSLHKVLEPFLLRRVKKDVEKSLPAKVEQILRVEMSALQKQYYKWILTRNYKALAKGTRGSTSGFLNIVMELKKCCNHCYLIKPPEENERENGQEILLSLIRSSGKLILLDKLLTRLRERGNRVLIFSQMVRMLDILAEYLTIKHYPFQRLDGSIKGEIRKQALDHFNADGSEDFCFLLSTRAGGLGINLASADTVVIFDSDWNPQNDLQAQARAHRIGQKKQVNIYRLVTKGTVEEEIIERAKKKMVLDHLVIQRMDTTGRTILENNSGRSNSNPFNKEELTAILKFGAEDLFKELEGEESEPQEMDIDEILRLAETRENEVSTSATDELLSQFKVANFATMEDEEELEERPHKDWDEIIPEEQRKKVEEEERQKELEEIYMLPRIRSSTKKAQTNDSDSDTESKRQAQRSSASESETEDSDDDKKPKRRGRPRSVRKDLVEGFTDAEIRRFIKAYKKFGLPLERLECIARDAELVDKSVADLKRLGELIHNSCVSAMQEYEEQLKENASEGKGPGKRRGPTIKISGVQVNVKSIIQHEEEFEMLHKSIPVDPEEKKKYCLTCRVKAAHFDVEWGVEDDSRLLLGIYEHGYGNWELIKTDPELKLTDKILPVETDKKPQGKQLQTRADYLLKLLRKGLEKKGAVTGGEEAKLKKRKPRVKKENKVPRLKEEHGIELSSPRHSDNPSEEGEVKDDGLEKSPMKKKQKKKENKENKEKQMSSRKDKEGDKERKKSKDKKEKPKSGDAKSSSKSKRSQGPVHITAGSEPVPIGEDEDDDLDQETFSICKERMRPVKKALKQLDKPDKGLNVQEQLEHTRNCLLKIGDRIAECLKAYSDQEHIKLWRRNLWIFVSKFTEFDARKLHKLYKMAHKKRSQEEEEQKKKDDVTGGKKPFRPEASGSSRDSLISQSHTSHNLHPQKPHLPASHGPQMHGHPRDNYNHPNKRHFSNADRGDWQRERKFNYGGGNNNPPWGSDRHHQYEQHWYKDHHYGDRRHMDAHRSGSYRPNNMSRKRPYDQYSSDRDHRGHRDYYDRHHHDSKRRRSDEFRPQNYHQQDFRRMSDHRPAMGYHGQGPSDHYRSFHTDKLGEYKQPLPPLHPAVSDPRSPPSQKSPHDSKSPLDHRSPLERSLEQKNNPDYNWNVRKT</sequence>
<dbReference type="EC" id="3.6.4.-" evidence="3"/>
<dbReference type="EMBL" id="AF006514">
    <property type="protein sequence ID" value="AAB87382.1"/>
    <property type="molecule type" value="mRNA"/>
</dbReference>
<dbReference type="EMBL" id="BT007050">
    <property type="protein sequence ID" value="AAP35699.1"/>
    <property type="molecule type" value="mRNA"/>
</dbReference>
<dbReference type="EMBL" id="FJ515838">
    <property type="protein sequence ID" value="ACS13730.1"/>
    <property type="molecule type" value="Genomic_DNA"/>
</dbReference>
<dbReference type="EMBL" id="AC013394">
    <property type="status" value="NOT_ANNOTATED_CDS"/>
    <property type="molecule type" value="Genomic_DNA"/>
</dbReference>
<dbReference type="EMBL" id="CH471101">
    <property type="protein sequence ID" value="EAX02160.1"/>
    <property type="molecule type" value="Genomic_DNA"/>
</dbReference>
<dbReference type="EMBL" id="BC007347">
    <property type="protein sequence ID" value="AAH07347.1"/>
    <property type="molecule type" value="mRNA"/>
</dbReference>
<dbReference type="EMBL" id="CR978407">
    <property type="status" value="NOT_ANNOTATED_CDS"/>
    <property type="molecule type" value="mRNA"/>
</dbReference>
<dbReference type="CCDS" id="CCDS10374.2">
    <molecule id="O14647-1"/>
</dbReference>
<dbReference type="CCDS" id="CCDS45356.1">
    <molecule id="O14647-3"/>
</dbReference>
<dbReference type="RefSeq" id="NP_001036037.1">
    <molecule id="O14647-3"/>
    <property type="nucleotide sequence ID" value="NM_001042572.3"/>
</dbReference>
<dbReference type="RefSeq" id="NP_001262.3">
    <molecule id="O14647-1"/>
    <property type="nucleotide sequence ID" value="NM_001271.4"/>
</dbReference>
<dbReference type="SMR" id="O14647"/>
<dbReference type="BioGRID" id="107531">
    <property type="interactions" value="64"/>
</dbReference>
<dbReference type="FunCoup" id="O14647">
    <property type="interactions" value="2696"/>
</dbReference>
<dbReference type="IntAct" id="O14647">
    <property type="interactions" value="34"/>
</dbReference>
<dbReference type="MINT" id="O14647"/>
<dbReference type="STRING" id="9606.ENSP00000377747"/>
<dbReference type="GlyGen" id="O14647">
    <property type="glycosylation" value="2 sites, 1 O-linked glycan (2 sites)"/>
</dbReference>
<dbReference type="iPTMnet" id="O14647"/>
<dbReference type="MetOSite" id="O14647"/>
<dbReference type="PhosphoSitePlus" id="O14647"/>
<dbReference type="SwissPalm" id="O14647"/>
<dbReference type="BioMuta" id="CHD2"/>
<dbReference type="jPOST" id="O14647"/>
<dbReference type="MassIVE" id="O14647"/>
<dbReference type="PaxDb" id="9606-ENSP00000377747"/>
<dbReference type="PeptideAtlas" id="O14647"/>
<dbReference type="ProteomicsDB" id="48144">
    <molecule id="O14647-1"/>
</dbReference>
<dbReference type="ProteomicsDB" id="48145">
    <molecule id="O14647-2"/>
</dbReference>
<dbReference type="ProteomicsDB" id="48146">
    <molecule id="O14647-3"/>
</dbReference>
<dbReference type="Pumba" id="O14647"/>
<dbReference type="ABCD" id="O14647">
    <property type="antibodies" value="1 sequenced antibody"/>
</dbReference>
<dbReference type="Antibodypedia" id="29044">
    <property type="antibodies" value="208 antibodies from 35 providers"/>
</dbReference>
<dbReference type="DNASU" id="1106"/>
<dbReference type="Ensembl" id="ENST00000394196.9">
    <molecule id="O14647-1"/>
    <property type="protein sequence ID" value="ENSP00000377747.4"/>
    <property type="gene ID" value="ENSG00000173575.24"/>
</dbReference>
<dbReference type="Ensembl" id="ENST00000420239.7">
    <molecule id="O14647-3"/>
    <property type="protein sequence ID" value="ENSP00000406581.2"/>
    <property type="gene ID" value="ENSG00000173575.24"/>
</dbReference>
<dbReference type="Ensembl" id="ENST00000626874.2">
    <molecule id="O14647-2"/>
    <property type="protein sequence ID" value="ENSP00000486629.1"/>
    <property type="gene ID" value="ENSG00000173575.24"/>
</dbReference>
<dbReference type="GeneID" id="1106"/>
<dbReference type="KEGG" id="hsa:1106"/>
<dbReference type="MANE-Select" id="ENST00000394196.9">
    <property type="protein sequence ID" value="ENSP00000377747.4"/>
    <property type="RefSeq nucleotide sequence ID" value="NM_001271.4"/>
    <property type="RefSeq protein sequence ID" value="NP_001262.3"/>
</dbReference>
<dbReference type="UCSC" id="uc002bsn.4">
    <molecule id="O14647-1"/>
    <property type="organism name" value="human"/>
</dbReference>
<dbReference type="AGR" id="HGNC:1917"/>
<dbReference type="CTD" id="1106"/>
<dbReference type="DisGeNET" id="1106"/>
<dbReference type="GeneCards" id="CHD2"/>
<dbReference type="GeneReviews" id="CHD2"/>
<dbReference type="HGNC" id="HGNC:1917">
    <property type="gene designation" value="CHD2"/>
</dbReference>
<dbReference type="HPA" id="ENSG00000173575">
    <property type="expression patterns" value="Low tissue specificity"/>
</dbReference>
<dbReference type="MalaCards" id="CHD2"/>
<dbReference type="MIM" id="602119">
    <property type="type" value="gene"/>
</dbReference>
<dbReference type="MIM" id="615369">
    <property type="type" value="phenotype"/>
</dbReference>
<dbReference type="neXtProt" id="NX_O14647"/>
<dbReference type="OpenTargets" id="ENSG00000173575"/>
<dbReference type="Orphanet" id="1942">
    <property type="disease" value="Epilepsy with myoclonic-atonic seizures"/>
</dbReference>
<dbReference type="Orphanet" id="2382">
    <property type="disease" value="Lennox-Gastaut syndrome"/>
</dbReference>
<dbReference type="PharmGKB" id="PA26453"/>
<dbReference type="VEuPathDB" id="HostDB:ENSG00000173575"/>
<dbReference type="eggNOG" id="KOG0384">
    <property type="taxonomic scope" value="Eukaryota"/>
</dbReference>
<dbReference type="GeneTree" id="ENSGT00940000155888"/>
<dbReference type="HOGENOM" id="CLU_645515_0_0_1"/>
<dbReference type="InParanoid" id="O14647"/>
<dbReference type="OMA" id="MLHAWCK"/>
<dbReference type="OrthoDB" id="5857104at2759"/>
<dbReference type="PAN-GO" id="O14647">
    <property type="GO annotations" value="9 GO annotations based on evolutionary models"/>
</dbReference>
<dbReference type="PhylomeDB" id="O14647"/>
<dbReference type="TreeFam" id="TF313461"/>
<dbReference type="PathwayCommons" id="O14647"/>
<dbReference type="SignaLink" id="O14647"/>
<dbReference type="SIGNOR" id="O14647"/>
<dbReference type="BioGRID-ORCS" id="1106">
    <property type="hits" value="32 hits in 1174 CRISPR screens"/>
</dbReference>
<dbReference type="ChiTaRS" id="CHD2">
    <property type="organism name" value="human"/>
</dbReference>
<dbReference type="GeneWiki" id="CHD2"/>
<dbReference type="GenomeRNAi" id="1106"/>
<dbReference type="Pharos" id="O14647">
    <property type="development level" value="Tbio"/>
</dbReference>
<dbReference type="PRO" id="PR:O14647"/>
<dbReference type="Proteomes" id="UP000005640">
    <property type="component" value="Chromosome 15"/>
</dbReference>
<dbReference type="RNAct" id="O14647">
    <property type="molecule type" value="protein"/>
</dbReference>
<dbReference type="Bgee" id="ENSG00000173575">
    <property type="expression patterns" value="Expressed in calcaneal tendon and 179 other cell types or tissues"/>
</dbReference>
<dbReference type="ExpressionAtlas" id="O14647">
    <property type="expression patterns" value="baseline and differential"/>
</dbReference>
<dbReference type="GO" id="GO:0000785">
    <property type="term" value="C:chromatin"/>
    <property type="evidence" value="ECO:0000318"/>
    <property type="project" value="GO_Central"/>
</dbReference>
<dbReference type="GO" id="GO:0005634">
    <property type="term" value="C:nucleus"/>
    <property type="evidence" value="ECO:0000250"/>
    <property type="project" value="UniProtKB"/>
</dbReference>
<dbReference type="GO" id="GO:0005524">
    <property type="term" value="F:ATP binding"/>
    <property type="evidence" value="ECO:0007669"/>
    <property type="project" value="UniProtKB-KW"/>
</dbReference>
<dbReference type="GO" id="GO:0016887">
    <property type="term" value="F:ATP hydrolysis activity"/>
    <property type="evidence" value="ECO:0000318"/>
    <property type="project" value="GO_Central"/>
</dbReference>
<dbReference type="GO" id="GO:0140658">
    <property type="term" value="F:ATP-dependent chromatin remodeler activity"/>
    <property type="evidence" value="ECO:0000318"/>
    <property type="project" value="GO_Central"/>
</dbReference>
<dbReference type="GO" id="GO:0003682">
    <property type="term" value="F:chromatin binding"/>
    <property type="evidence" value="ECO:0000318"/>
    <property type="project" value="GO_Central"/>
</dbReference>
<dbReference type="GO" id="GO:0003677">
    <property type="term" value="F:DNA binding"/>
    <property type="evidence" value="ECO:0000318"/>
    <property type="project" value="GO_Central"/>
</dbReference>
<dbReference type="GO" id="GO:0004386">
    <property type="term" value="F:helicase activity"/>
    <property type="evidence" value="ECO:0007669"/>
    <property type="project" value="UniProtKB-KW"/>
</dbReference>
<dbReference type="GO" id="GO:0042393">
    <property type="term" value="F:histone binding"/>
    <property type="evidence" value="ECO:0000250"/>
    <property type="project" value="UniProtKB"/>
</dbReference>
<dbReference type="GO" id="GO:0003723">
    <property type="term" value="F:RNA binding"/>
    <property type="evidence" value="ECO:0007005"/>
    <property type="project" value="UniProtKB"/>
</dbReference>
<dbReference type="GO" id="GO:0000978">
    <property type="term" value="F:RNA polymerase II cis-regulatory region sequence-specific DNA binding"/>
    <property type="evidence" value="ECO:0000250"/>
    <property type="project" value="UniProtKB"/>
</dbReference>
<dbReference type="GO" id="GO:0006974">
    <property type="term" value="P:DNA damage response"/>
    <property type="evidence" value="ECO:0007669"/>
    <property type="project" value="Ensembl"/>
</dbReference>
<dbReference type="GO" id="GO:0010467">
    <property type="term" value="P:gene expression"/>
    <property type="evidence" value="ECO:0007669"/>
    <property type="project" value="Ensembl"/>
</dbReference>
<dbReference type="GO" id="GO:0060218">
    <property type="term" value="P:hematopoietic stem cell differentiation"/>
    <property type="evidence" value="ECO:0007669"/>
    <property type="project" value="Ensembl"/>
</dbReference>
<dbReference type="GO" id="GO:0007517">
    <property type="term" value="P:muscle organ development"/>
    <property type="evidence" value="ECO:0000250"/>
    <property type="project" value="UniProtKB"/>
</dbReference>
<dbReference type="GO" id="GO:0034728">
    <property type="term" value="P:nucleosome organization"/>
    <property type="evidence" value="ECO:0000318"/>
    <property type="project" value="GO_Central"/>
</dbReference>
<dbReference type="CDD" id="cd18666">
    <property type="entry name" value="CD1_tandem_CHD1-2_like"/>
    <property type="match status" value="1"/>
</dbReference>
<dbReference type="CDD" id="cd18661">
    <property type="entry name" value="CD2_tandem_CHD1-2_like"/>
    <property type="match status" value="1"/>
</dbReference>
<dbReference type="CDD" id="cd18054">
    <property type="entry name" value="DEXHc_CHD2"/>
    <property type="match status" value="1"/>
</dbReference>
<dbReference type="CDD" id="cd18793">
    <property type="entry name" value="SF2_C_SNF"/>
    <property type="match status" value="1"/>
</dbReference>
<dbReference type="FunFam" id="1.10.10.60:FF:000106">
    <property type="entry name" value="Chromodomain-helicase-DNA-binding protein 2 isoform 1"/>
    <property type="match status" value="1"/>
</dbReference>
<dbReference type="FunFam" id="2.40.50.40:FF:000008">
    <property type="entry name" value="Chromodomain-helicase-DNA-binding protein 2 isoform 1"/>
    <property type="match status" value="1"/>
</dbReference>
<dbReference type="FunFam" id="2.40.50.40:FF:000014">
    <property type="entry name" value="Chromodomain-helicase-DNA-binding protein 2 isoform 1"/>
    <property type="match status" value="1"/>
</dbReference>
<dbReference type="FunFam" id="3.40.50.10810:FF:000007">
    <property type="entry name" value="Chromodomain-helicase-DNA-binding protein 2 isoform 1"/>
    <property type="match status" value="1"/>
</dbReference>
<dbReference type="FunFam" id="3.40.50.300:FF:000130">
    <property type="entry name" value="Chromodomain-helicase-DNA-binding protein 2 isoform 1"/>
    <property type="match status" value="1"/>
</dbReference>
<dbReference type="Gene3D" id="2.40.50.40">
    <property type="match status" value="2"/>
</dbReference>
<dbReference type="Gene3D" id="6.10.140.1440">
    <property type="match status" value="1"/>
</dbReference>
<dbReference type="Gene3D" id="1.10.10.60">
    <property type="entry name" value="Homeodomain-like"/>
    <property type="match status" value="1"/>
</dbReference>
<dbReference type="Gene3D" id="3.40.50.300">
    <property type="entry name" value="P-loop containing nucleotide triphosphate hydrolases"/>
    <property type="match status" value="1"/>
</dbReference>
<dbReference type="Gene3D" id="3.40.50.10810">
    <property type="entry name" value="Tandem AAA-ATPase domain"/>
    <property type="match status" value="1"/>
</dbReference>
<dbReference type="InterPro" id="IPR040793">
    <property type="entry name" value="CDH1_2_SANT_HL1"/>
</dbReference>
<dbReference type="InterPro" id="IPR056302">
    <property type="entry name" value="CHD1-2/Hrp3_HTH"/>
</dbReference>
<dbReference type="InterPro" id="IPR025260">
    <property type="entry name" value="CHD1-like_C"/>
</dbReference>
<dbReference type="InterPro" id="IPR016197">
    <property type="entry name" value="Chromo-like_dom_sf"/>
</dbReference>
<dbReference type="InterPro" id="IPR000953">
    <property type="entry name" value="Chromo/chromo_shadow_dom"/>
</dbReference>
<dbReference type="InterPro" id="IPR023780">
    <property type="entry name" value="Chromo_domain"/>
</dbReference>
<dbReference type="InterPro" id="IPR023779">
    <property type="entry name" value="Chromodomain_CS"/>
</dbReference>
<dbReference type="InterPro" id="IPR014001">
    <property type="entry name" value="Helicase_ATP-bd"/>
</dbReference>
<dbReference type="InterPro" id="IPR001650">
    <property type="entry name" value="Helicase_C-like"/>
</dbReference>
<dbReference type="InterPro" id="IPR027417">
    <property type="entry name" value="P-loop_NTPase"/>
</dbReference>
<dbReference type="InterPro" id="IPR038718">
    <property type="entry name" value="SNF2-like_sf"/>
</dbReference>
<dbReference type="InterPro" id="IPR049730">
    <property type="entry name" value="SNF2/RAD54-like_C"/>
</dbReference>
<dbReference type="InterPro" id="IPR000330">
    <property type="entry name" value="SNF2_N"/>
</dbReference>
<dbReference type="PANTHER" id="PTHR45623:SF19">
    <property type="entry name" value="CHROMODOMAIN-HELICASE-DNA-BINDING PROTEIN 2"/>
    <property type="match status" value="1"/>
</dbReference>
<dbReference type="PANTHER" id="PTHR45623">
    <property type="entry name" value="CHROMODOMAIN-HELICASE-DNA-BINDING PROTEIN 3-RELATED-RELATED"/>
    <property type="match status" value="1"/>
</dbReference>
<dbReference type="Pfam" id="PF18375">
    <property type="entry name" value="CDH1_2_SANT_HL1"/>
    <property type="match status" value="1"/>
</dbReference>
<dbReference type="Pfam" id="PF13907">
    <property type="entry name" value="CHD1-like_C"/>
    <property type="match status" value="1"/>
</dbReference>
<dbReference type="Pfam" id="PF00385">
    <property type="entry name" value="Chromo"/>
    <property type="match status" value="2"/>
</dbReference>
<dbReference type="Pfam" id="PF00271">
    <property type="entry name" value="Helicase_C"/>
    <property type="match status" value="1"/>
</dbReference>
<dbReference type="Pfam" id="PF23588">
    <property type="entry name" value="HTH_CHD1_Hrp3"/>
    <property type="match status" value="1"/>
</dbReference>
<dbReference type="Pfam" id="PF00176">
    <property type="entry name" value="SNF2-rel_dom"/>
    <property type="match status" value="1"/>
</dbReference>
<dbReference type="SMART" id="SM00298">
    <property type="entry name" value="CHROMO"/>
    <property type="match status" value="2"/>
</dbReference>
<dbReference type="SMART" id="SM00487">
    <property type="entry name" value="DEXDc"/>
    <property type="match status" value="1"/>
</dbReference>
<dbReference type="SMART" id="SM01176">
    <property type="entry name" value="DUF4208"/>
    <property type="match status" value="1"/>
</dbReference>
<dbReference type="SMART" id="SM00490">
    <property type="entry name" value="HELICc"/>
    <property type="match status" value="1"/>
</dbReference>
<dbReference type="SUPFAM" id="SSF54160">
    <property type="entry name" value="Chromo domain-like"/>
    <property type="match status" value="2"/>
</dbReference>
<dbReference type="SUPFAM" id="SSF52540">
    <property type="entry name" value="P-loop containing nucleoside triphosphate hydrolases"/>
    <property type="match status" value="2"/>
</dbReference>
<dbReference type="PROSITE" id="PS00598">
    <property type="entry name" value="CHROMO_1"/>
    <property type="match status" value="2"/>
</dbReference>
<dbReference type="PROSITE" id="PS50013">
    <property type="entry name" value="CHROMO_2"/>
    <property type="match status" value="2"/>
</dbReference>
<dbReference type="PROSITE" id="PS51192">
    <property type="entry name" value="HELICASE_ATP_BIND_1"/>
    <property type="match status" value="1"/>
</dbReference>
<dbReference type="PROSITE" id="PS51194">
    <property type="entry name" value="HELICASE_CTER"/>
    <property type="match status" value="1"/>
</dbReference>
<reference key="1">
    <citation type="journal article" date="1997" name="Proc. Natl. Acad. Sci. U.S.A.">
        <title>Characterization of the CHD family of proteins.</title>
        <authorList>
            <person name="Woodage T."/>
            <person name="Basrai M.A."/>
            <person name="Baxevanis A.D."/>
            <person name="Hieter P."/>
            <person name="Collins F.S."/>
        </authorList>
    </citation>
    <scope>NUCLEOTIDE SEQUENCE [MRNA] (ISOFORM 2)</scope>
</reference>
<reference key="2">
    <citation type="submission" date="2003-05" db="EMBL/GenBank/DDBJ databases">
        <title>Cloning of human full-length CDSs in BD Creator(TM) system donor vector.</title>
        <authorList>
            <person name="Kalnine N."/>
            <person name="Chen X."/>
            <person name="Rolfs A."/>
            <person name="Halleck A."/>
            <person name="Hines L."/>
            <person name="Eisenstein S."/>
            <person name="Koundinya M."/>
            <person name="Raphael J."/>
            <person name="Moreira D."/>
            <person name="Kelley T."/>
            <person name="LaBaer J."/>
            <person name="Lin Y."/>
            <person name="Phelan M."/>
            <person name="Farmer A."/>
        </authorList>
    </citation>
    <scope>NUCLEOTIDE SEQUENCE [LARGE SCALE MRNA] (ISOFORM 3)</scope>
</reference>
<reference key="3">
    <citation type="submission" date="2008-12" db="EMBL/GenBank/DDBJ databases">
        <authorList>
            <consortium name="NHLBI resequencing and genotyping service (RS&amp;G)"/>
        </authorList>
    </citation>
    <scope>NUCLEOTIDE SEQUENCE [GENOMIC DNA]</scope>
</reference>
<reference key="4">
    <citation type="journal article" date="2006" name="Nature">
        <title>Analysis of the DNA sequence and duplication history of human chromosome 15.</title>
        <authorList>
            <person name="Zody M.C."/>
            <person name="Garber M."/>
            <person name="Sharpe T."/>
            <person name="Young S.K."/>
            <person name="Rowen L."/>
            <person name="O'Neill K."/>
            <person name="Whittaker C.A."/>
            <person name="Kamal M."/>
            <person name="Chang J.L."/>
            <person name="Cuomo C.A."/>
            <person name="Dewar K."/>
            <person name="FitzGerald M.G."/>
            <person name="Kodira C.D."/>
            <person name="Madan A."/>
            <person name="Qin S."/>
            <person name="Yang X."/>
            <person name="Abbasi N."/>
            <person name="Abouelleil A."/>
            <person name="Arachchi H.M."/>
            <person name="Baradarani L."/>
            <person name="Birditt B."/>
            <person name="Bloom S."/>
            <person name="Bloom T."/>
            <person name="Borowsky M.L."/>
            <person name="Burke J."/>
            <person name="Butler J."/>
            <person name="Cook A."/>
            <person name="DeArellano K."/>
            <person name="DeCaprio D."/>
            <person name="Dorris L. III"/>
            <person name="Dors M."/>
            <person name="Eichler E.E."/>
            <person name="Engels R."/>
            <person name="Fahey J."/>
            <person name="Fleetwood P."/>
            <person name="Friedman C."/>
            <person name="Gearin G."/>
            <person name="Hall J.L."/>
            <person name="Hensley G."/>
            <person name="Johnson E."/>
            <person name="Jones C."/>
            <person name="Kamat A."/>
            <person name="Kaur A."/>
            <person name="Locke D.P."/>
            <person name="Madan A."/>
            <person name="Munson G."/>
            <person name="Jaffe D.B."/>
            <person name="Lui A."/>
            <person name="Macdonald P."/>
            <person name="Mauceli E."/>
            <person name="Naylor J.W."/>
            <person name="Nesbitt R."/>
            <person name="Nicol R."/>
            <person name="O'Leary S.B."/>
            <person name="Ratcliffe A."/>
            <person name="Rounsley S."/>
            <person name="She X."/>
            <person name="Sneddon K.M.B."/>
            <person name="Stewart S."/>
            <person name="Sougnez C."/>
            <person name="Stone S.M."/>
            <person name="Topham K."/>
            <person name="Vincent D."/>
            <person name="Wang S."/>
            <person name="Zimmer A.R."/>
            <person name="Birren B.W."/>
            <person name="Hood L."/>
            <person name="Lander E.S."/>
            <person name="Nusbaum C."/>
        </authorList>
    </citation>
    <scope>NUCLEOTIDE SEQUENCE [LARGE SCALE GENOMIC DNA]</scope>
</reference>
<reference key="5">
    <citation type="submission" date="2005-07" db="EMBL/GenBank/DDBJ databases">
        <authorList>
            <person name="Mural R.J."/>
            <person name="Istrail S."/>
            <person name="Sutton G.G."/>
            <person name="Florea L."/>
            <person name="Halpern A.L."/>
            <person name="Mobarry C.M."/>
            <person name="Lippert R."/>
            <person name="Walenz B."/>
            <person name="Shatkay H."/>
            <person name="Dew I."/>
            <person name="Miller J.R."/>
            <person name="Flanigan M.J."/>
            <person name="Edwards N.J."/>
            <person name="Bolanos R."/>
            <person name="Fasulo D."/>
            <person name="Halldorsson B.V."/>
            <person name="Hannenhalli S."/>
            <person name="Turner R."/>
            <person name="Yooseph S."/>
            <person name="Lu F."/>
            <person name="Nusskern D.R."/>
            <person name="Shue B.C."/>
            <person name="Zheng X.H."/>
            <person name="Zhong F."/>
            <person name="Delcher A.L."/>
            <person name="Huson D.H."/>
            <person name="Kravitz S.A."/>
            <person name="Mouchard L."/>
            <person name="Reinert K."/>
            <person name="Remington K.A."/>
            <person name="Clark A.G."/>
            <person name="Waterman M.S."/>
            <person name="Eichler E.E."/>
            <person name="Adams M.D."/>
            <person name="Hunkapiller M.W."/>
            <person name="Myers E.W."/>
            <person name="Venter J.C."/>
        </authorList>
    </citation>
    <scope>NUCLEOTIDE SEQUENCE [LARGE SCALE GENOMIC DNA]</scope>
</reference>
<reference key="6">
    <citation type="journal article" date="2004" name="Genome Res.">
        <title>The status, quality, and expansion of the NIH full-length cDNA project: the Mammalian Gene Collection (MGC).</title>
        <authorList>
            <consortium name="The MGC Project Team"/>
        </authorList>
    </citation>
    <scope>NUCLEOTIDE SEQUENCE [LARGE SCALE MRNA] (ISOFORM 3)</scope>
    <source>
        <tissue>Skin</tissue>
    </source>
</reference>
<reference key="7">
    <citation type="journal article" date="2007" name="BMC Genomics">
        <title>The full-ORF clone resource of the German cDNA consortium.</title>
        <authorList>
            <person name="Bechtel S."/>
            <person name="Rosenfelder H."/>
            <person name="Duda A."/>
            <person name="Schmidt C.P."/>
            <person name="Ernst U."/>
            <person name="Wellenreuther R."/>
            <person name="Mehrle A."/>
            <person name="Schuster C."/>
            <person name="Bahr A."/>
            <person name="Bloecker H."/>
            <person name="Heubner D."/>
            <person name="Hoerlein A."/>
            <person name="Michel G."/>
            <person name="Wedler H."/>
            <person name="Koehrer K."/>
            <person name="Ottenwaelder B."/>
            <person name="Poustka A."/>
            <person name="Wiemann S."/>
            <person name="Schupp I."/>
        </authorList>
    </citation>
    <scope>NUCLEOTIDE SEQUENCE [LARGE SCALE MRNA] OF 1635-1828 (ISOFORM 1)</scope>
    <source>
        <tissue>T-cell</tissue>
    </source>
</reference>
<reference key="8">
    <citation type="journal article" date="2008" name="Mol. Cell">
        <title>Kinase-selective enrichment enables quantitative phosphoproteomics of the kinome across the cell cycle.</title>
        <authorList>
            <person name="Daub H."/>
            <person name="Olsen J.V."/>
            <person name="Bairlein M."/>
            <person name="Gnad F."/>
            <person name="Oppermann F.S."/>
            <person name="Korner R."/>
            <person name="Greff Z."/>
            <person name="Keri G."/>
            <person name="Stemmann O."/>
            <person name="Mann M."/>
        </authorList>
    </citation>
    <scope>IDENTIFICATION BY MASS SPECTROMETRY [LARGE SCALE ANALYSIS]</scope>
    <source>
        <tissue>Cervix carcinoma</tissue>
    </source>
</reference>
<reference key="9">
    <citation type="journal article" date="2008" name="Proc. Natl. Acad. Sci. U.S.A.">
        <title>A quantitative atlas of mitotic phosphorylation.</title>
        <authorList>
            <person name="Dephoure N."/>
            <person name="Zhou C."/>
            <person name="Villen J."/>
            <person name="Beausoleil S.A."/>
            <person name="Bakalarski C.E."/>
            <person name="Elledge S.J."/>
            <person name="Gygi S.P."/>
        </authorList>
    </citation>
    <scope>PHOSPHORYLATION [LARGE SCALE ANALYSIS] AT THR-240 AND SER-242</scope>
    <scope>IDENTIFICATION BY MASS SPECTROMETRY [LARGE SCALE ANALYSIS]</scope>
    <source>
        <tissue>Cervix carcinoma</tissue>
    </source>
</reference>
<reference key="10">
    <citation type="journal article" date="2010" name="Sci. Signal.">
        <title>Quantitative phosphoproteomics reveals widespread full phosphorylation site occupancy during mitosis.</title>
        <authorList>
            <person name="Olsen J.V."/>
            <person name="Vermeulen M."/>
            <person name="Santamaria A."/>
            <person name="Kumar C."/>
            <person name="Miller M.L."/>
            <person name="Jensen L.J."/>
            <person name="Gnad F."/>
            <person name="Cox J."/>
            <person name="Jensen T.S."/>
            <person name="Nigg E.A."/>
            <person name="Brunak S."/>
            <person name="Mann M."/>
        </authorList>
    </citation>
    <scope>PHOSPHORYLATION [LARGE SCALE ANALYSIS] AT SER-207 AND SER-208</scope>
    <scope>IDENTIFICATION BY MASS SPECTROMETRY [LARGE SCALE ANALYSIS]</scope>
    <source>
        <tissue>Cervix carcinoma</tissue>
    </source>
</reference>
<reference key="11">
    <citation type="journal article" date="2011" name="Sci. Signal.">
        <title>System-wide temporal characterization of the proteome and phosphoproteome of human embryonic stem cell differentiation.</title>
        <authorList>
            <person name="Rigbolt K.T."/>
            <person name="Prokhorova T.A."/>
            <person name="Akimov V."/>
            <person name="Henningsen J."/>
            <person name="Johansen P.T."/>
            <person name="Kratchmarova I."/>
            <person name="Kassem M."/>
            <person name="Mann M."/>
            <person name="Olsen J.V."/>
            <person name="Blagoev B."/>
        </authorList>
    </citation>
    <scope>PHOSPHORYLATION [LARGE SCALE ANALYSIS] AT SER-207; SER-208; THR-240 AND SER-242</scope>
    <scope>IDENTIFICATION BY MASS SPECTROMETRY [LARGE SCALE ANALYSIS]</scope>
</reference>
<reference key="12">
    <citation type="journal article" date="2013" name="J. Proteome Res.">
        <title>Toward a comprehensive characterization of a human cancer cell phosphoproteome.</title>
        <authorList>
            <person name="Zhou H."/>
            <person name="Di Palma S."/>
            <person name="Preisinger C."/>
            <person name="Peng M."/>
            <person name="Polat A.N."/>
            <person name="Heck A.J."/>
            <person name="Mohammed S."/>
        </authorList>
    </citation>
    <scope>PHOSPHORYLATION [LARGE SCALE ANALYSIS] AT SER-1365; SER-1386 AND SER-1807</scope>
    <scope>IDENTIFICATION BY MASS SPECTROMETRY [LARGE SCALE ANALYSIS]</scope>
    <source>
        <tissue>Cervix carcinoma</tissue>
        <tissue>Erythroleukemia</tissue>
    </source>
</reference>
<reference key="13">
    <citation type="journal article" date="2014" name="J. Proteomics">
        <title>An enzyme assisted RP-RPLC approach for in-depth analysis of human liver phosphoproteome.</title>
        <authorList>
            <person name="Bian Y."/>
            <person name="Song C."/>
            <person name="Cheng K."/>
            <person name="Dong M."/>
            <person name="Wang F."/>
            <person name="Huang J."/>
            <person name="Sun D."/>
            <person name="Wang L."/>
            <person name="Ye M."/>
            <person name="Zou H."/>
        </authorList>
    </citation>
    <scope>PHOSPHORYLATION [LARGE SCALE ANALYSIS] AT SER-207; SER-208; SER-1085 AND SER-1087</scope>
    <scope>IDENTIFICATION BY MASS SPECTROMETRY [LARGE SCALE ANALYSIS]</scope>
    <source>
        <tissue>Liver</tissue>
    </source>
</reference>
<reference key="14">
    <citation type="journal article" date="2013" name="Nat. Genet.">
        <title>Targeted resequencing in epileptic encephalopathies identifies de novo mutations in CHD2 and SYNGAP1.</title>
        <authorList>
            <person name="Carvill G.L."/>
            <person name="Heavin S.B."/>
            <person name="Yendle S.C."/>
            <person name="McMahon J.M."/>
            <person name="O'Roak B.J."/>
            <person name="Cook J."/>
            <person name="Khan A."/>
            <person name="Dorschner M.O."/>
            <person name="Weaver M."/>
            <person name="Calvert S."/>
            <person name="Malone S."/>
            <person name="Wallace G."/>
            <person name="Stanley T."/>
            <person name="Bye A.M."/>
            <person name="Bleasel A."/>
            <person name="Howell K.B."/>
            <person name="Kivity S."/>
            <person name="Mackay M.T."/>
            <person name="Rodriguez-Casero V."/>
            <person name="Webster R."/>
            <person name="Korczyn A."/>
            <person name="Afawi Z."/>
            <person name="Zelnick N."/>
            <person name="Lerman-Sagie T."/>
            <person name="Lev D."/>
            <person name="Moeller R.S."/>
            <person name="Gill D."/>
            <person name="Andrade D.M."/>
            <person name="Freeman J.L."/>
            <person name="Sadleir L.G."/>
            <person name="Shendure J."/>
            <person name="Berkovic S.F."/>
            <person name="Scheffer I.E."/>
            <person name="Mefford H.C."/>
        </authorList>
    </citation>
    <scope>VARIANTS DEE94 121-ARG--THR-1828 DEL; ARG-548 AND PRO-823</scope>
</reference>
<reference key="15">
    <citation type="journal article" date="2014" name="PLoS Genet.">
        <title>De novo mutations in moderate or severe intellectual disability.</title>
        <authorList>
            <person name="Hamdan F.F."/>
            <person name="Srour M."/>
            <person name="Capo-Chichi J.M."/>
            <person name="Daoud H."/>
            <person name="Nassif C."/>
            <person name="Patry L."/>
            <person name="Massicotte C."/>
            <person name="Ambalavanan A."/>
            <person name="Spiegelman D."/>
            <person name="Diallo O."/>
            <person name="Henrion E."/>
            <person name="Dionne-Laporte A."/>
            <person name="Fougerat A."/>
            <person name="Pshezhetsky A.V."/>
            <person name="Venkateswaran S."/>
            <person name="Rouleau G.A."/>
            <person name="Michaud J.L."/>
        </authorList>
    </citation>
    <scope>VARIANT DEE94 112-SER--THR-1828 DEL</scope>
</reference>
<reference key="16">
    <citation type="journal article" date="2021" name="Am. J. Hum. Genet.">
        <title>Progressive myoclonus epilepsies-Residual unsolved cases have marked genetic heterogeneity including dolichol-dependent protein glycosylation pathway genes.</title>
        <authorList>
            <person name="Courage C."/>
            <person name="Oliver K.L."/>
            <person name="Park E.J."/>
            <person name="Cameron J.M."/>
            <person name="Grabinska K.A."/>
            <person name="Muona M."/>
            <person name="Canafoglia L."/>
            <person name="Gambardella A."/>
            <person name="Said E."/>
            <person name="Afawi Z."/>
            <person name="Baykan B."/>
            <person name="Brandt C."/>
            <person name="di Bonaventura C."/>
            <person name="Chew H.B."/>
            <person name="Criscuolo C."/>
            <person name="Dibbens L.M."/>
            <person name="Castellotti B."/>
            <person name="Riguzzi P."/>
            <person name="Labate A."/>
            <person name="Filla A."/>
            <person name="Giallonardo A.T."/>
            <person name="Berecki G."/>
            <person name="Jackson C.B."/>
            <person name="Joensuu T."/>
            <person name="Damiano J.A."/>
            <person name="Kivity S."/>
            <person name="Korczyn A."/>
            <person name="Palotie A."/>
            <person name="Striano P."/>
            <person name="Uccellini D."/>
            <person name="Giuliano L."/>
            <person name="Andermann E."/>
            <person name="Scheffer I.E."/>
            <person name="Michelucci R."/>
            <person name="Bahlo M."/>
            <person name="Franceschetti S."/>
            <person name="Sessa W.C."/>
            <person name="Berkovic S.F."/>
            <person name="Lehesjoki A.E."/>
        </authorList>
    </citation>
    <scope>VARIANT 178-ARG--THR-1828 DEL</scope>
</reference>
<protein>
    <recommendedName>
        <fullName>Chromodomain-helicase-DNA-binding protein 2</fullName>
        <shortName>CHD-2</shortName>
        <ecNumber evidence="3">3.6.4.-</ecNumber>
    </recommendedName>
    <alternativeName>
        <fullName>ATP-dependent helicase CHD2</fullName>
    </alternativeName>
</protein>
<accession>O14647</accession>
<accession>C6G482</accession>
<accession>Q96IP5</accession>
<proteinExistence type="evidence at protein level"/>
<gene>
    <name type="primary">CHD2</name>
</gene>